<gene>
    <name evidence="1" type="primary">efp</name>
    <name type="ordered locus">BCG9842_B0927</name>
</gene>
<organism>
    <name type="scientific">Bacillus cereus (strain G9842)</name>
    <dbReference type="NCBI Taxonomy" id="405531"/>
    <lineage>
        <taxon>Bacteria</taxon>
        <taxon>Bacillati</taxon>
        <taxon>Bacillota</taxon>
        <taxon>Bacilli</taxon>
        <taxon>Bacillales</taxon>
        <taxon>Bacillaceae</taxon>
        <taxon>Bacillus</taxon>
        <taxon>Bacillus cereus group</taxon>
    </lineage>
</organism>
<keyword id="KW-0963">Cytoplasm</keyword>
<keyword id="KW-0251">Elongation factor</keyword>
<keyword id="KW-0648">Protein biosynthesis</keyword>
<name>EFP_BACC2</name>
<feature type="chain" id="PRO_1000117885" description="Elongation factor P">
    <location>
        <begin position="1"/>
        <end position="185"/>
    </location>
</feature>
<protein>
    <recommendedName>
        <fullName evidence="1">Elongation factor P</fullName>
        <shortName evidence="1">EF-P</shortName>
    </recommendedName>
</protein>
<dbReference type="EMBL" id="CP001186">
    <property type="protein sequence ID" value="ACK95835.1"/>
    <property type="molecule type" value="Genomic_DNA"/>
</dbReference>
<dbReference type="RefSeq" id="WP_000626513.1">
    <property type="nucleotide sequence ID" value="NC_011772.1"/>
</dbReference>
<dbReference type="SMR" id="B7IXI8"/>
<dbReference type="GeneID" id="67468501"/>
<dbReference type="KEGG" id="bcg:BCG9842_B0927"/>
<dbReference type="HOGENOM" id="CLU_074944_0_1_9"/>
<dbReference type="UniPathway" id="UPA00345"/>
<dbReference type="Proteomes" id="UP000006744">
    <property type="component" value="Chromosome"/>
</dbReference>
<dbReference type="GO" id="GO:0005737">
    <property type="term" value="C:cytoplasm"/>
    <property type="evidence" value="ECO:0007669"/>
    <property type="project" value="UniProtKB-SubCell"/>
</dbReference>
<dbReference type="GO" id="GO:0003746">
    <property type="term" value="F:translation elongation factor activity"/>
    <property type="evidence" value="ECO:0007669"/>
    <property type="project" value="UniProtKB-UniRule"/>
</dbReference>
<dbReference type="GO" id="GO:0043043">
    <property type="term" value="P:peptide biosynthetic process"/>
    <property type="evidence" value="ECO:0007669"/>
    <property type="project" value="InterPro"/>
</dbReference>
<dbReference type="CDD" id="cd04470">
    <property type="entry name" value="S1_EF-P_repeat_1"/>
    <property type="match status" value="1"/>
</dbReference>
<dbReference type="CDD" id="cd05794">
    <property type="entry name" value="S1_EF-P_repeat_2"/>
    <property type="match status" value="1"/>
</dbReference>
<dbReference type="FunFam" id="2.30.30.30:FF:000010">
    <property type="entry name" value="Elongation factor P"/>
    <property type="match status" value="1"/>
</dbReference>
<dbReference type="FunFam" id="2.40.50.140:FF:000004">
    <property type="entry name" value="Elongation factor P"/>
    <property type="match status" value="1"/>
</dbReference>
<dbReference type="FunFam" id="2.40.50.140:FF:000009">
    <property type="entry name" value="Elongation factor P"/>
    <property type="match status" value="1"/>
</dbReference>
<dbReference type="Gene3D" id="2.30.30.30">
    <property type="match status" value="1"/>
</dbReference>
<dbReference type="Gene3D" id="2.40.50.140">
    <property type="entry name" value="Nucleic acid-binding proteins"/>
    <property type="match status" value="2"/>
</dbReference>
<dbReference type="HAMAP" id="MF_00141">
    <property type="entry name" value="EF_P"/>
    <property type="match status" value="1"/>
</dbReference>
<dbReference type="InterPro" id="IPR015365">
    <property type="entry name" value="Elong-fact-P_C"/>
</dbReference>
<dbReference type="InterPro" id="IPR012340">
    <property type="entry name" value="NA-bd_OB-fold"/>
</dbReference>
<dbReference type="InterPro" id="IPR014722">
    <property type="entry name" value="Rib_uL2_dom2"/>
</dbReference>
<dbReference type="InterPro" id="IPR020599">
    <property type="entry name" value="Transl_elong_fac_P/YeiP"/>
</dbReference>
<dbReference type="InterPro" id="IPR013185">
    <property type="entry name" value="Transl_elong_KOW-like"/>
</dbReference>
<dbReference type="InterPro" id="IPR001059">
    <property type="entry name" value="Transl_elong_P/YeiP_cen"/>
</dbReference>
<dbReference type="InterPro" id="IPR013852">
    <property type="entry name" value="Transl_elong_P/YeiP_CS"/>
</dbReference>
<dbReference type="InterPro" id="IPR011768">
    <property type="entry name" value="Transl_elongation_fac_P"/>
</dbReference>
<dbReference type="InterPro" id="IPR008991">
    <property type="entry name" value="Translation_prot_SH3-like_sf"/>
</dbReference>
<dbReference type="NCBIfam" id="TIGR00038">
    <property type="entry name" value="efp"/>
    <property type="match status" value="1"/>
</dbReference>
<dbReference type="NCBIfam" id="NF001810">
    <property type="entry name" value="PRK00529.1"/>
    <property type="match status" value="1"/>
</dbReference>
<dbReference type="PANTHER" id="PTHR30053">
    <property type="entry name" value="ELONGATION FACTOR P"/>
    <property type="match status" value="1"/>
</dbReference>
<dbReference type="PANTHER" id="PTHR30053:SF12">
    <property type="entry name" value="ELONGATION FACTOR P (EF-P) FAMILY PROTEIN"/>
    <property type="match status" value="1"/>
</dbReference>
<dbReference type="Pfam" id="PF01132">
    <property type="entry name" value="EFP"/>
    <property type="match status" value="1"/>
</dbReference>
<dbReference type="Pfam" id="PF08207">
    <property type="entry name" value="EFP_N"/>
    <property type="match status" value="1"/>
</dbReference>
<dbReference type="Pfam" id="PF09285">
    <property type="entry name" value="Elong-fact-P_C"/>
    <property type="match status" value="1"/>
</dbReference>
<dbReference type="PIRSF" id="PIRSF005901">
    <property type="entry name" value="EF-P"/>
    <property type="match status" value="1"/>
</dbReference>
<dbReference type="SMART" id="SM01185">
    <property type="entry name" value="EFP"/>
    <property type="match status" value="1"/>
</dbReference>
<dbReference type="SMART" id="SM00841">
    <property type="entry name" value="Elong-fact-P_C"/>
    <property type="match status" value="1"/>
</dbReference>
<dbReference type="SUPFAM" id="SSF50249">
    <property type="entry name" value="Nucleic acid-binding proteins"/>
    <property type="match status" value="2"/>
</dbReference>
<dbReference type="SUPFAM" id="SSF50104">
    <property type="entry name" value="Translation proteins SH3-like domain"/>
    <property type="match status" value="1"/>
</dbReference>
<dbReference type="PROSITE" id="PS01275">
    <property type="entry name" value="EFP"/>
    <property type="match status" value="1"/>
</dbReference>
<reference key="1">
    <citation type="submission" date="2008-10" db="EMBL/GenBank/DDBJ databases">
        <title>Genome sequence of Bacillus cereus G9842.</title>
        <authorList>
            <person name="Dodson R.J."/>
            <person name="Durkin A.S."/>
            <person name="Rosovitz M.J."/>
            <person name="Rasko D.A."/>
            <person name="Hoffmaster A."/>
            <person name="Ravel J."/>
            <person name="Sutton G."/>
        </authorList>
    </citation>
    <scope>NUCLEOTIDE SEQUENCE [LARGE SCALE GENOMIC DNA]</scope>
    <source>
        <strain>G9842</strain>
    </source>
</reference>
<proteinExistence type="inferred from homology"/>
<comment type="function">
    <text evidence="1">Involved in peptide bond synthesis. Stimulates efficient translation and peptide-bond synthesis on native or reconstituted 70S ribosomes in vitro. Probably functions indirectly by altering the affinity of the ribosome for aminoacyl-tRNA, thus increasing their reactivity as acceptors for peptidyl transferase.</text>
</comment>
<comment type="pathway">
    <text evidence="1">Protein biosynthesis; polypeptide chain elongation.</text>
</comment>
<comment type="subcellular location">
    <subcellularLocation>
        <location evidence="1">Cytoplasm</location>
    </subcellularLocation>
</comment>
<comment type="similarity">
    <text evidence="1">Belongs to the elongation factor P family.</text>
</comment>
<evidence type="ECO:0000255" key="1">
    <source>
        <dbReference type="HAMAP-Rule" id="MF_00141"/>
    </source>
</evidence>
<accession>B7IXI8</accession>
<sequence length="185" mass="20706">MISVNDFRTGLTISVDNALWQVLDFQHVKPGKGAAFVRSKLRNIRTGSVQEKTFRAGEKVEKAHIENRRMQYLYASGEAHVFMDNGTYEQIELGEKQIERELKFLKENMEVAIMTYQGEVLGVELPNTVELQVTETEPGIKGDTASNVTKPATLETGLVVQVPIFINEGEMLIINTGEGKYVSRA</sequence>